<name>MTEF3_RAT</name>
<comment type="function">
    <text evidence="1 2">Binds promoter DNA and regulates initiation of transcription. Required for normal mitochondrial transcription and translation, and for normal assembly of mitochondrial respiratory complexes. Required for normal mitochondrial function. Maintains 16S rRNA levels and functions in mitochondrial ribosome assembly by regulating the biogenesis of the 39S ribosomal subunit (By similarity).</text>
</comment>
<comment type="subcellular location">
    <subcellularLocation>
        <location evidence="2">Mitochondrion</location>
    </subcellularLocation>
</comment>
<comment type="domain">
    <text evidence="2">Contains seven structural repeats of about 35 residues, where each repeat contains three helices. The repeats form a superhelical structure with a solenoid shape (By similarity).</text>
</comment>
<comment type="similarity">
    <text evidence="4">Belongs to the mTERF family.</text>
</comment>
<sequence>MALLAQQLSRWFNSVKLSSFIKATQVTKHSAGLGKNASAQALLSSDTCFLQWGIKTDRALFSWSSFQSANTTRRKSSTNSTLLPSVSEQPEKIPRLESELPLEELDDLPPLSPLQPVSEEEAIQIAAYSPLPLSSSTLADYVDHSETLQKLVQLGVDLSKIEKHPDVANLLLRLNFEKDIKQILLFLKDLGLEDNQLGPFLTKNYAIFSEDLENLKTRVAYLQSKNFSKTDIACMVKNAPFLLSFSVERLDNRLGFFQKELELSVKKTRDLVVRLPRLLTGSLEPVKENMKVYRLELGFKHNEIQHMVTKIPKMLTANKRKLTETFDYVHNVMNIPHHIIVKFPQVFNTRVFKIKERHLFLAYLGKAQYDPAKPNYVSLDKFVSFPDEVFCKEIAKASVNDFEKFLKTL</sequence>
<feature type="transit peptide" description="Mitochondrion" evidence="2">
    <location>
        <begin position="1"/>
        <end position="64"/>
    </location>
</feature>
<feature type="chain" id="PRO_0000255459" description="Transcription termination factor 3, mitochondrial">
    <location>
        <begin position="65"/>
        <end position="409"/>
    </location>
</feature>
<feature type="region of interest" description="Disordered" evidence="3">
    <location>
        <begin position="74"/>
        <end position="93"/>
    </location>
</feature>
<protein>
    <recommendedName>
        <fullName>Transcription termination factor 3, mitochondrial</fullName>
    </recommendedName>
    <alternativeName>
        <fullName>Mitochondrial transcription termination factor 3</fullName>
        <shortName>mTERF3</shortName>
    </alternativeName>
    <alternativeName>
        <fullName>mTERF domain-containing protein 1, mitochondrial</fullName>
    </alternativeName>
</protein>
<evidence type="ECO:0000250" key="1">
    <source>
        <dbReference type="UniProtKB" id="Q8R3J4"/>
    </source>
</evidence>
<evidence type="ECO:0000250" key="2">
    <source>
        <dbReference type="UniProtKB" id="Q96E29"/>
    </source>
</evidence>
<evidence type="ECO:0000256" key="3">
    <source>
        <dbReference type="SAM" id="MobiDB-lite"/>
    </source>
</evidence>
<evidence type="ECO:0000305" key="4"/>
<organism>
    <name type="scientific">Rattus norvegicus</name>
    <name type="common">Rat</name>
    <dbReference type="NCBI Taxonomy" id="10116"/>
    <lineage>
        <taxon>Eukaryota</taxon>
        <taxon>Metazoa</taxon>
        <taxon>Chordata</taxon>
        <taxon>Craniata</taxon>
        <taxon>Vertebrata</taxon>
        <taxon>Euteleostomi</taxon>
        <taxon>Mammalia</taxon>
        <taxon>Eutheria</taxon>
        <taxon>Euarchontoglires</taxon>
        <taxon>Glires</taxon>
        <taxon>Rodentia</taxon>
        <taxon>Myomorpha</taxon>
        <taxon>Muroidea</taxon>
        <taxon>Muridae</taxon>
        <taxon>Murinae</taxon>
        <taxon>Rattus</taxon>
    </lineage>
</organism>
<reference key="1">
    <citation type="journal article" date="2004" name="Genome Res.">
        <title>The status, quality, and expansion of the NIH full-length cDNA project: the Mammalian Gene Collection (MGC).</title>
        <authorList>
            <consortium name="The MGC Project Team"/>
        </authorList>
    </citation>
    <scope>NUCLEOTIDE SEQUENCE [LARGE SCALE MRNA]</scope>
    <source>
        <tissue>Prostate</tissue>
    </source>
</reference>
<keyword id="KW-0496">Mitochondrion</keyword>
<keyword id="KW-1185">Reference proteome</keyword>
<keyword id="KW-0690">Ribosome biogenesis</keyword>
<keyword id="KW-0804">Transcription</keyword>
<keyword id="KW-0805">Transcription regulation</keyword>
<keyword id="KW-0809">Transit peptide</keyword>
<dbReference type="EMBL" id="BC062080">
    <property type="protein sequence ID" value="AAH62080.1"/>
    <property type="molecule type" value="mRNA"/>
</dbReference>
<dbReference type="RefSeq" id="NP_955419.1">
    <property type="nucleotide sequence ID" value="NM_199387.1"/>
</dbReference>
<dbReference type="SMR" id="Q6P6Q6"/>
<dbReference type="FunCoup" id="Q6P6Q6">
    <property type="interactions" value="2774"/>
</dbReference>
<dbReference type="STRING" id="10116.ENSRNOP00000006185"/>
<dbReference type="PhosphoSitePlus" id="Q6P6Q6"/>
<dbReference type="PaxDb" id="10116-ENSRNOP00000006185"/>
<dbReference type="Ensembl" id="ENSRNOT00000006185.7">
    <property type="protein sequence ID" value="ENSRNOP00000006185.5"/>
    <property type="gene ID" value="ENSRNOG00000004492.7"/>
</dbReference>
<dbReference type="GeneID" id="299514"/>
<dbReference type="KEGG" id="rno:299514"/>
<dbReference type="UCSC" id="RGD:735158">
    <property type="organism name" value="rat"/>
</dbReference>
<dbReference type="AGR" id="RGD:735158"/>
<dbReference type="CTD" id="51001"/>
<dbReference type="RGD" id="735158">
    <property type="gene designation" value="Mterf3"/>
</dbReference>
<dbReference type="eggNOG" id="KOG1267">
    <property type="taxonomic scope" value="Eukaryota"/>
</dbReference>
<dbReference type="GeneTree" id="ENSGT00390000005801"/>
<dbReference type="HOGENOM" id="CLU_042536_0_0_1"/>
<dbReference type="InParanoid" id="Q6P6Q6"/>
<dbReference type="OMA" id="VFNTRVF"/>
<dbReference type="OrthoDB" id="637682at2759"/>
<dbReference type="PhylomeDB" id="Q6P6Q6"/>
<dbReference type="Reactome" id="R-RNO-5205685">
    <property type="pathway name" value="PINK1-PRKN Mediated Mitophagy"/>
</dbReference>
<dbReference type="PRO" id="PR:Q6P6Q6"/>
<dbReference type="Proteomes" id="UP000002494">
    <property type="component" value="Chromosome 7"/>
</dbReference>
<dbReference type="Bgee" id="ENSRNOG00000004492">
    <property type="expression patterns" value="Expressed in kidney and 20 other cell types or tissues"/>
</dbReference>
<dbReference type="GO" id="GO:0005759">
    <property type="term" value="C:mitochondrial matrix"/>
    <property type="evidence" value="ECO:0000266"/>
    <property type="project" value="RGD"/>
</dbReference>
<dbReference type="GO" id="GO:0005739">
    <property type="term" value="C:mitochondrion"/>
    <property type="evidence" value="ECO:0000250"/>
    <property type="project" value="UniProtKB"/>
</dbReference>
<dbReference type="GO" id="GO:0000976">
    <property type="term" value="F:transcription cis-regulatory region binding"/>
    <property type="evidence" value="ECO:0000250"/>
    <property type="project" value="UniProtKB"/>
</dbReference>
<dbReference type="GO" id="GO:0061668">
    <property type="term" value="P:mitochondrial ribosome assembly"/>
    <property type="evidence" value="ECO:0000318"/>
    <property type="project" value="GO_Central"/>
</dbReference>
<dbReference type="GO" id="GO:0006390">
    <property type="term" value="P:mitochondrial transcription"/>
    <property type="evidence" value="ECO:0000318"/>
    <property type="project" value="GO_Central"/>
</dbReference>
<dbReference type="GO" id="GO:0045892">
    <property type="term" value="P:negative regulation of DNA-templated transcription"/>
    <property type="evidence" value="ECO:0000250"/>
    <property type="project" value="UniProtKB"/>
</dbReference>
<dbReference type="FunFam" id="1.25.70.10:FF:000002">
    <property type="entry name" value="transcription termination factor 3, mitochondrial"/>
    <property type="match status" value="1"/>
</dbReference>
<dbReference type="Gene3D" id="1.25.70.10">
    <property type="entry name" value="Transcription termination factor 3, mitochondrial"/>
    <property type="match status" value="1"/>
</dbReference>
<dbReference type="InterPro" id="IPR003690">
    <property type="entry name" value="MTERF"/>
</dbReference>
<dbReference type="InterPro" id="IPR038538">
    <property type="entry name" value="MTERF_sf"/>
</dbReference>
<dbReference type="PANTHER" id="PTHR13068">
    <property type="entry name" value="CGI-12 PROTEIN-RELATED"/>
    <property type="match status" value="1"/>
</dbReference>
<dbReference type="PANTHER" id="PTHR13068:SF194">
    <property type="entry name" value="TRANSCRIPTION TERMINATION FACTOR 3, MITOCHONDRIAL"/>
    <property type="match status" value="1"/>
</dbReference>
<dbReference type="Pfam" id="PF02536">
    <property type="entry name" value="mTERF"/>
    <property type="match status" value="1"/>
</dbReference>
<dbReference type="SMART" id="SM00733">
    <property type="entry name" value="Mterf"/>
    <property type="match status" value="6"/>
</dbReference>
<accession>Q6P6Q6</accession>
<gene>
    <name type="primary">Mterf3</name>
    <name type="synonym">Mterfd1</name>
    <name type="ordered locus">CGI-12</name>
</gene>
<proteinExistence type="evidence at transcript level"/>